<sequence>MTRLLIAASGTGGHLFPALAVAEALPEDWQVRWLGVPDRLETQLVPARYSLFTVNAGGLQGSRLSKAVQLLLLLAAGVSVARLIRRERIQLVLSTGGYIAAPAILAARFCGVPTVLHEANAIPGRVTRLLGRFCGAVAVGLPAAAGRIPGSRPLMTGMPVRADFLQSQPCPAWVPEGRGPLLVVIGGSQGAVGLNRMVRAVLPPLLEQGCRVVHLTGRNDTEVGQVQHPLLVEQPFSDEIPGLLQHADLAVSRAGAGSLSELAVCGTPTILVPFPQAADQHQEANAACAAEQGGAVIVHQHEPEATVLQQTIQCLLGHRLGHPDADPSLLPSMREGMERLAIRDADQRLVDLLQSLLD</sequence>
<comment type="function">
    <text evidence="1">Cell wall formation. Catalyzes the transfer of a GlcNAc subunit on undecaprenyl-pyrophosphoryl-MurNAc-pentapeptide (lipid intermediate I) to form undecaprenyl-pyrophosphoryl-MurNAc-(pentapeptide)GlcNAc (lipid intermediate II).</text>
</comment>
<comment type="catalytic activity">
    <reaction evidence="1">
        <text>di-trans,octa-cis-undecaprenyl diphospho-N-acetyl-alpha-D-muramoyl-L-alanyl-D-glutamyl-meso-2,6-diaminopimeloyl-D-alanyl-D-alanine + UDP-N-acetyl-alpha-D-glucosamine = di-trans,octa-cis-undecaprenyl diphospho-[N-acetyl-alpha-D-glucosaminyl-(1-&gt;4)]-N-acetyl-alpha-D-muramoyl-L-alanyl-D-glutamyl-meso-2,6-diaminopimeloyl-D-alanyl-D-alanine + UDP + H(+)</text>
        <dbReference type="Rhea" id="RHEA:31227"/>
        <dbReference type="ChEBI" id="CHEBI:15378"/>
        <dbReference type="ChEBI" id="CHEBI:57705"/>
        <dbReference type="ChEBI" id="CHEBI:58223"/>
        <dbReference type="ChEBI" id="CHEBI:61387"/>
        <dbReference type="ChEBI" id="CHEBI:61388"/>
        <dbReference type="EC" id="2.4.1.227"/>
    </reaction>
</comment>
<comment type="pathway">
    <text evidence="1">Cell wall biogenesis; peptidoglycan biosynthesis.</text>
</comment>
<comment type="subcellular location">
    <subcellularLocation>
        <location evidence="1">Cell inner membrane</location>
        <topology evidence="1">Peripheral membrane protein</topology>
        <orientation evidence="1">Cytoplasmic side</orientation>
    </subcellularLocation>
</comment>
<comment type="similarity">
    <text evidence="1">Belongs to the glycosyltransferase 28 family. MurG subfamily.</text>
</comment>
<keyword id="KW-0131">Cell cycle</keyword>
<keyword id="KW-0132">Cell division</keyword>
<keyword id="KW-0997">Cell inner membrane</keyword>
<keyword id="KW-1003">Cell membrane</keyword>
<keyword id="KW-0133">Cell shape</keyword>
<keyword id="KW-0961">Cell wall biogenesis/degradation</keyword>
<keyword id="KW-0328">Glycosyltransferase</keyword>
<keyword id="KW-0472">Membrane</keyword>
<keyword id="KW-0573">Peptidoglycan synthesis</keyword>
<keyword id="KW-0808">Transferase</keyword>
<organism>
    <name type="scientific">Parasynechococcus marenigrum (strain WH8102)</name>
    <dbReference type="NCBI Taxonomy" id="84588"/>
    <lineage>
        <taxon>Bacteria</taxon>
        <taxon>Bacillati</taxon>
        <taxon>Cyanobacteriota</taxon>
        <taxon>Cyanophyceae</taxon>
        <taxon>Synechococcales</taxon>
        <taxon>Prochlorococcaceae</taxon>
        <taxon>Parasynechococcus</taxon>
        <taxon>Parasynechococcus marenigrum</taxon>
    </lineage>
</organism>
<accession>Q7U3U6</accession>
<reference key="1">
    <citation type="journal article" date="2003" name="Nature">
        <title>The genome of a motile marine Synechococcus.</title>
        <authorList>
            <person name="Palenik B."/>
            <person name="Brahamsha B."/>
            <person name="Larimer F.W."/>
            <person name="Land M.L."/>
            <person name="Hauser L."/>
            <person name="Chain P."/>
            <person name="Lamerdin J.E."/>
            <person name="Regala W."/>
            <person name="Allen E.E."/>
            <person name="McCarren J."/>
            <person name="Paulsen I.T."/>
            <person name="Dufresne A."/>
            <person name="Partensky F."/>
            <person name="Webb E.A."/>
            <person name="Waterbury J."/>
        </authorList>
    </citation>
    <scope>NUCLEOTIDE SEQUENCE [LARGE SCALE GENOMIC DNA]</scope>
    <source>
        <strain>WH8102</strain>
    </source>
</reference>
<protein>
    <recommendedName>
        <fullName evidence="1">UDP-N-acetylglucosamine--N-acetylmuramyl-(pentapeptide) pyrophosphoryl-undecaprenol N-acetylglucosamine transferase</fullName>
        <ecNumber evidence="1">2.4.1.227</ecNumber>
    </recommendedName>
    <alternativeName>
        <fullName evidence="1">Undecaprenyl-PP-MurNAc-pentapeptide-UDPGlcNAc GlcNAc transferase</fullName>
    </alternativeName>
</protein>
<gene>
    <name evidence="1" type="primary">murG</name>
    <name type="ordered locus">SYNW2333</name>
</gene>
<name>MURG_PARMW</name>
<proteinExistence type="inferred from homology"/>
<feature type="chain" id="PRO_0000225107" description="UDP-N-acetylglucosamine--N-acetylmuramyl-(pentapeptide) pyrophosphoryl-undecaprenol N-acetylglucosamine transferase">
    <location>
        <begin position="1"/>
        <end position="358"/>
    </location>
</feature>
<feature type="binding site" evidence="1">
    <location>
        <begin position="11"/>
        <end position="13"/>
    </location>
    <ligand>
        <name>UDP-N-acetyl-alpha-D-glucosamine</name>
        <dbReference type="ChEBI" id="CHEBI:57705"/>
    </ligand>
</feature>
<feature type="binding site" evidence="1">
    <location>
        <position position="120"/>
    </location>
    <ligand>
        <name>UDP-N-acetyl-alpha-D-glucosamine</name>
        <dbReference type="ChEBI" id="CHEBI:57705"/>
    </ligand>
</feature>
<feature type="binding site" evidence="1">
    <location>
        <position position="161"/>
    </location>
    <ligand>
        <name>UDP-N-acetyl-alpha-D-glucosamine</name>
        <dbReference type="ChEBI" id="CHEBI:57705"/>
    </ligand>
</feature>
<feature type="binding site" evidence="1">
    <location>
        <position position="188"/>
    </location>
    <ligand>
        <name>UDP-N-acetyl-alpha-D-glucosamine</name>
        <dbReference type="ChEBI" id="CHEBI:57705"/>
    </ligand>
</feature>
<feature type="binding site" evidence="1">
    <location>
        <position position="282"/>
    </location>
    <ligand>
        <name>UDP-N-acetyl-alpha-D-glucosamine</name>
        <dbReference type="ChEBI" id="CHEBI:57705"/>
    </ligand>
</feature>
<dbReference type="EC" id="2.4.1.227" evidence="1"/>
<dbReference type="EMBL" id="BX569695">
    <property type="protein sequence ID" value="CAE08848.1"/>
    <property type="molecule type" value="Genomic_DNA"/>
</dbReference>
<dbReference type="RefSeq" id="WP_011129186.1">
    <property type="nucleotide sequence ID" value="NC_005070.1"/>
</dbReference>
<dbReference type="SMR" id="Q7U3U6"/>
<dbReference type="STRING" id="84588.SYNW2333"/>
<dbReference type="CAZy" id="GT28">
    <property type="family name" value="Glycosyltransferase Family 28"/>
</dbReference>
<dbReference type="KEGG" id="syw:SYNW2333"/>
<dbReference type="eggNOG" id="COG0707">
    <property type="taxonomic scope" value="Bacteria"/>
</dbReference>
<dbReference type="HOGENOM" id="CLU_037404_2_1_3"/>
<dbReference type="UniPathway" id="UPA00219"/>
<dbReference type="Proteomes" id="UP000001422">
    <property type="component" value="Chromosome"/>
</dbReference>
<dbReference type="GO" id="GO:0005886">
    <property type="term" value="C:plasma membrane"/>
    <property type="evidence" value="ECO:0007669"/>
    <property type="project" value="UniProtKB-SubCell"/>
</dbReference>
<dbReference type="GO" id="GO:0051991">
    <property type="term" value="F:UDP-N-acetyl-D-glucosamine:N-acetylmuramoyl-L-alanyl-D-glutamyl-meso-2,6-diaminopimelyl-D-alanyl-D-alanine-diphosphoundecaprenol 4-beta-N-acetylglucosaminlytransferase activity"/>
    <property type="evidence" value="ECO:0007669"/>
    <property type="project" value="RHEA"/>
</dbReference>
<dbReference type="GO" id="GO:0050511">
    <property type="term" value="F:undecaprenyldiphospho-muramoylpentapeptide beta-N-acetylglucosaminyltransferase activity"/>
    <property type="evidence" value="ECO:0007669"/>
    <property type="project" value="UniProtKB-UniRule"/>
</dbReference>
<dbReference type="GO" id="GO:0005975">
    <property type="term" value="P:carbohydrate metabolic process"/>
    <property type="evidence" value="ECO:0007669"/>
    <property type="project" value="InterPro"/>
</dbReference>
<dbReference type="GO" id="GO:0051301">
    <property type="term" value="P:cell division"/>
    <property type="evidence" value="ECO:0007669"/>
    <property type="project" value="UniProtKB-KW"/>
</dbReference>
<dbReference type="GO" id="GO:0071555">
    <property type="term" value="P:cell wall organization"/>
    <property type="evidence" value="ECO:0007669"/>
    <property type="project" value="UniProtKB-KW"/>
</dbReference>
<dbReference type="GO" id="GO:0030259">
    <property type="term" value="P:lipid glycosylation"/>
    <property type="evidence" value="ECO:0007669"/>
    <property type="project" value="UniProtKB-UniRule"/>
</dbReference>
<dbReference type="GO" id="GO:0009252">
    <property type="term" value="P:peptidoglycan biosynthetic process"/>
    <property type="evidence" value="ECO:0007669"/>
    <property type="project" value="UniProtKB-UniRule"/>
</dbReference>
<dbReference type="GO" id="GO:0008360">
    <property type="term" value="P:regulation of cell shape"/>
    <property type="evidence" value="ECO:0007669"/>
    <property type="project" value="UniProtKB-KW"/>
</dbReference>
<dbReference type="CDD" id="cd03785">
    <property type="entry name" value="GT28_MurG"/>
    <property type="match status" value="1"/>
</dbReference>
<dbReference type="Gene3D" id="3.40.50.2000">
    <property type="entry name" value="Glycogen Phosphorylase B"/>
    <property type="match status" value="2"/>
</dbReference>
<dbReference type="HAMAP" id="MF_00033">
    <property type="entry name" value="MurG"/>
    <property type="match status" value="1"/>
</dbReference>
<dbReference type="InterPro" id="IPR006009">
    <property type="entry name" value="GlcNAc_MurG"/>
</dbReference>
<dbReference type="InterPro" id="IPR007235">
    <property type="entry name" value="Glyco_trans_28_C"/>
</dbReference>
<dbReference type="InterPro" id="IPR004276">
    <property type="entry name" value="GlycoTrans_28_N"/>
</dbReference>
<dbReference type="PANTHER" id="PTHR21015:SF22">
    <property type="entry name" value="GLYCOSYLTRANSFERASE"/>
    <property type="match status" value="1"/>
</dbReference>
<dbReference type="PANTHER" id="PTHR21015">
    <property type="entry name" value="UDP-N-ACETYLGLUCOSAMINE--N-ACETYLMURAMYL-(PENTAPEPTIDE) PYROPHOSPHORYL-UNDECAPRENOL N-ACETYLGLUCOSAMINE TRANSFERASE 1"/>
    <property type="match status" value="1"/>
</dbReference>
<dbReference type="Pfam" id="PF04101">
    <property type="entry name" value="Glyco_tran_28_C"/>
    <property type="match status" value="1"/>
</dbReference>
<dbReference type="Pfam" id="PF03033">
    <property type="entry name" value="Glyco_transf_28"/>
    <property type="match status" value="1"/>
</dbReference>
<dbReference type="SUPFAM" id="SSF53756">
    <property type="entry name" value="UDP-Glycosyltransferase/glycogen phosphorylase"/>
    <property type="match status" value="1"/>
</dbReference>
<evidence type="ECO:0000255" key="1">
    <source>
        <dbReference type="HAMAP-Rule" id="MF_00033"/>
    </source>
</evidence>